<name>YBEY_PSEP7</name>
<accession>A6V0C7</accession>
<keyword id="KW-0963">Cytoplasm</keyword>
<keyword id="KW-0255">Endonuclease</keyword>
<keyword id="KW-0378">Hydrolase</keyword>
<keyword id="KW-0479">Metal-binding</keyword>
<keyword id="KW-0540">Nuclease</keyword>
<keyword id="KW-0690">Ribosome biogenesis</keyword>
<keyword id="KW-0698">rRNA processing</keyword>
<keyword id="KW-0862">Zinc</keyword>
<feature type="chain" id="PRO_0000321782" description="Endoribonuclease YbeY">
    <location>
        <begin position="1"/>
        <end position="160"/>
    </location>
</feature>
<feature type="region of interest" description="Disordered" evidence="2">
    <location>
        <begin position="141"/>
        <end position="160"/>
    </location>
</feature>
<feature type="binding site" evidence="1">
    <location>
        <position position="112"/>
    </location>
    <ligand>
        <name>Zn(2+)</name>
        <dbReference type="ChEBI" id="CHEBI:29105"/>
        <note>catalytic</note>
    </ligand>
</feature>
<feature type="binding site" evidence="1">
    <location>
        <position position="116"/>
    </location>
    <ligand>
        <name>Zn(2+)</name>
        <dbReference type="ChEBI" id="CHEBI:29105"/>
        <note>catalytic</note>
    </ligand>
</feature>
<feature type="binding site" evidence="1">
    <location>
        <position position="122"/>
    </location>
    <ligand>
        <name>Zn(2+)</name>
        <dbReference type="ChEBI" id="CHEBI:29105"/>
        <note>catalytic</note>
    </ligand>
</feature>
<dbReference type="EC" id="3.1.-.-" evidence="1"/>
<dbReference type="EMBL" id="CP000744">
    <property type="protein sequence ID" value="ABR82517.1"/>
    <property type="status" value="ALT_INIT"/>
    <property type="molecule type" value="Genomic_DNA"/>
</dbReference>
<dbReference type="RefSeq" id="WP_003157108.1">
    <property type="nucleotide sequence ID" value="NC_009656.1"/>
</dbReference>
<dbReference type="SMR" id="A6V0C7"/>
<dbReference type="GeneID" id="77219471"/>
<dbReference type="KEGG" id="pap:PSPA7_1126"/>
<dbReference type="HOGENOM" id="CLU_106710_0_1_6"/>
<dbReference type="Proteomes" id="UP000001582">
    <property type="component" value="Chromosome"/>
</dbReference>
<dbReference type="GO" id="GO:0005737">
    <property type="term" value="C:cytoplasm"/>
    <property type="evidence" value="ECO:0007669"/>
    <property type="project" value="UniProtKB-SubCell"/>
</dbReference>
<dbReference type="GO" id="GO:0004222">
    <property type="term" value="F:metalloendopeptidase activity"/>
    <property type="evidence" value="ECO:0007669"/>
    <property type="project" value="InterPro"/>
</dbReference>
<dbReference type="GO" id="GO:0004521">
    <property type="term" value="F:RNA endonuclease activity"/>
    <property type="evidence" value="ECO:0007669"/>
    <property type="project" value="UniProtKB-UniRule"/>
</dbReference>
<dbReference type="GO" id="GO:0008270">
    <property type="term" value="F:zinc ion binding"/>
    <property type="evidence" value="ECO:0007669"/>
    <property type="project" value="UniProtKB-UniRule"/>
</dbReference>
<dbReference type="GO" id="GO:0006364">
    <property type="term" value="P:rRNA processing"/>
    <property type="evidence" value="ECO:0007669"/>
    <property type="project" value="UniProtKB-UniRule"/>
</dbReference>
<dbReference type="Gene3D" id="3.40.390.30">
    <property type="entry name" value="Metalloproteases ('zincins'), catalytic domain"/>
    <property type="match status" value="1"/>
</dbReference>
<dbReference type="HAMAP" id="MF_00009">
    <property type="entry name" value="Endoribonucl_YbeY"/>
    <property type="match status" value="1"/>
</dbReference>
<dbReference type="InterPro" id="IPR023091">
    <property type="entry name" value="MetalPrtase_cat_dom_sf_prd"/>
</dbReference>
<dbReference type="InterPro" id="IPR002036">
    <property type="entry name" value="YbeY"/>
</dbReference>
<dbReference type="InterPro" id="IPR020549">
    <property type="entry name" value="YbeY_CS"/>
</dbReference>
<dbReference type="NCBIfam" id="TIGR00043">
    <property type="entry name" value="rRNA maturation RNase YbeY"/>
    <property type="match status" value="1"/>
</dbReference>
<dbReference type="PANTHER" id="PTHR46986">
    <property type="entry name" value="ENDORIBONUCLEASE YBEY, CHLOROPLASTIC"/>
    <property type="match status" value="1"/>
</dbReference>
<dbReference type="PANTHER" id="PTHR46986:SF1">
    <property type="entry name" value="ENDORIBONUCLEASE YBEY, CHLOROPLASTIC"/>
    <property type="match status" value="1"/>
</dbReference>
<dbReference type="Pfam" id="PF02130">
    <property type="entry name" value="YbeY"/>
    <property type="match status" value="1"/>
</dbReference>
<dbReference type="SUPFAM" id="SSF55486">
    <property type="entry name" value="Metalloproteases ('zincins'), catalytic domain"/>
    <property type="match status" value="1"/>
</dbReference>
<dbReference type="PROSITE" id="PS01306">
    <property type="entry name" value="UPF0054"/>
    <property type="match status" value="1"/>
</dbReference>
<organism>
    <name type="scientific">Pseudomonas paraeruginosa (strain DSM 24068 / PA7)</name>
    <name type="common">Pseudomonas aeruginosa (strain PA7)</name>
    <dbReference type="NCBI Taxonomy" id="381754"/>
    <lineage>
        <taxon>Bacteria</taxon>
        <taxon>Pseudomonadati</taxon>
        <taxon>Pseudomonadota</taxon>
        <taxon>Gammaproteobacteria</taxon>
        <taxon>Pseudomonadales</taxon>
        <taxon>Pseudomonadaceae</taxon>
        <taxon>Pseudomonas</taxon>
        <taxon>Pseudomonas paraeruginosa</taxon>
    </lineage>
</organism>
<evidence type="ECO:0000255" key="1">
    <source>
        <dbReference type="HAMAP-Rule" id="MF_00009"/>
    </source>
</evidence>
<evidence type="ECO:0000256" key="2">
    <source>
        <dbReference type="SAM" id="MobiDB-lite"/>
    </source>
</evidence>
<evidence type="ECO:0000305" key="3"/>
<comment type="function">
    <text evidence="1">Single strand-specific metallo-endoribonuclease involved in late-stage 70S ribosome quality control and in maturation of the 3' terminus of the 16S rRNA.</text>
</comment>
<comment type="cofactor">
    <cofactor evidence="1">
        <name>Zn(2+)</name>
        <dbReference type="ChEBI" id="CHEBI:29105"/>
    </cofactor>
    <text evidence="1">Binds 1 zinc ion.</text>
</comment>
<comment type="subcellular location">
    <subcellularLocation>
        <location evidence="1">Cytoplasm</location>
    </subcellularLocation>
</comment>
<comment type="similarity">
    <text evidence="1">Belongs to the endoribonuclease YbeY family.</text>
</comment>
<comment type="sequence caution" evidence="3">
    <conflict type="erroneous initiation">
        <sequence resource="EMBL-CDS" id="ABR82517"/>
    </conflict>
</comment>
<proteinExistence type="inferred from homology"/>
<gene>
    <name evidence="1" type="primary">ybeY</name>
    <name type="ordered locus">PSPA7_1126</name>
</gene>
<reference key="1">
    <citation type="submission" date="2007-06" db="EMBL/GenBank/DDBJ databases">
        <authorList>
            <person name="Dodson R.J."/>
            <person name="Harkins D."/>
            <person name="Paulsen I.T."/>
        </authorList>
    </citation>
    <scope>NUCLEOTIDE SEQUENCE [LARGE SCALE GENOMIC DNA]</scope>
    <source>
        <strain>DSM 24068 / PA7</strain>
    </source>
</reference>
<protein>
    <recommendedName>
        <fullName evidence="1">Endoribonuclease YbeY</fullName>
        <ecNumber evidence="1">3.1.-.-</ecNumber>
    </recommendedName>
</protein>
<sequence>MPLELDLQVASDAADLPSEAQFRAWCELALRQRAESELTIRLVDEAEGLELNSTYRHKDYATNVLSFPADVPEEFLDIPLLGDLVICAPVVAREAREQHKPLQAHWAHLVIHGCLHLLGYDHIDDAEAEEMETLERELLAELGHPDPYACDDEEPPSKEK</sequence>